<name>MAP1_KLEOX</name>
<feature type="chain" id="PRO_0000148943" description="Methionine aminopeptidase">
    <location>
        <begin position="1" status="less than"/>
        <end position="43"/>
    </location>
</feature>
<feature type="non-terminal residue">
    <location>
        <position position="1"/>
    </location>
</feature>
<keyword id="KW-0031">Aminopeptidase</keyword>
<keyword id="KW-0378">Hydrolase</keyword>
<keyword id="KW-0479">Metal-binding</keyword>
<keyword id="KW-0645">Protease</keyword>
<proteinExistence type="inferred from homology"/>
<gene>
    <name type="primary">map</name>
</gene>
<protein>
    <recommendedName>
        <fullName>Methionine aminopeptidase</fullName>
        <shortName>MAP</shortName>
        <shortName>MetAP</shortName>
        <ecNumber>3.4.11.18</ecNumber>
    </recommendedName>
    <alternativeName>
        <fullName>Peptidase M</fullName>
    </alternativeName>
</protein>
<dbReference type="EC" id="3.4.11.18"/>
<dbReference type="EMBL" id="X78685">
    <property type="protein sequence ID" value="CAA55352.1"/>
    <property type="molecule type" value="Genomic_DNA"/>
</dbReference>
<dbReference type="PIR" id="S54755">
    <property type="entry name" value="S43195"/>
</dbReference>
<dbReference type="SMR" id="P41392"/>
<dbReference type="STRING" id="571.AB185_31005"/>
<dbReference type="MEROPS" id="M24.001"/>
<dbReference type="eggNOG" id="COG0024">
    <property type="taxonomic scope" value="Bacteria"/>
</dbReference>
<dbReference type="GO" id="GO:0004239">
    <property type="term" value="F:initiator methionyl aminopeptidase activity"/>
    <property type="evidence" value="ECO:0007669"/>
    <property type="project" value="UniProtKB-EC"/>
</dbReference>
<dbReference type="GO" id="GO:0046872">
    <property type="term" value="F:metal ion binding"/>
    <property type="evidence" value="ECO:0007669"/>
    <property type="project" value="UniProtKB-KW"/>
</dbReference>
<dbReference type="GO" id="GO:0006508">
    <property type="term" value="P:proteolysis"/>
    <property type="evidence" value="ECO:0007669"/>
    <property type="project" value="UniProtKB-KW"/>
</dbReference>
<dbReference type="Gene3D" id="3.90.230.10">
    <property type="entry name" value="Creatinase/methionine aminopeptidase superfamily"/>
    <property type="match status" value="1"/>
</dbReference>
<dbReference type="InterPro" id="IPR036005">
    <property type="entry name" value="Creatinase/aminopeptidase-like"/>
</dbReference>
<dbReference type="SUPFAM" id="SSF55920">
    <property type="entry name" value="Creatinase/aminopeptidase"/>
    <property type="match status" value="1"/>
</dbReference>
<comment type="function">
    <text evidence="1">Removes the N-terminal methionine from nascent proteins. The N-terminal methionine is often cleaved when the second residue in the primary sequence is small and uncharged (Met-Ala-, Cys, Gly, Pro, Ser, Thr, or Val). Requires deformylation of the N(alpha)-formylated initiator methionine before it can be hydrolyzed (By similarity).</text>
</comment>
<comment type="catalytic activity">
    <reaction>
        <text>Release of N-terminal amino acids, preferentially methionine, from peptides and arylamides.</text>
        <dbReference type="EC" id="3.4.11.18"/>
    </reaction>
</comment>
<comment type="cofactor">
    <cofactor evidence="1">
        <name>Co(2+)</name>
        <dbReference type="ChEBI" id="CHEBI:48828"/>
    </cofactor>
    <cofactor evidence="1">
        <name>Zn(2+)</name>
        <dbReference type="ChEBI" id="CHEBI:29105"/>
    </cofactor>
    <cofactor evidence="1">
        <name>Mn(2+)</name>
        <dbReference type="ChEBI" id="CHEBI:29035"/>
    </cofactor>
    <cofactor evidence="1">
        <name>Fe(2+)</name>
        <dbReference type="ChEBI" id="CHEBI:29033"/>
    </cofactor>
    <text evidence="1">Binds 2 divalent metal cations per subunit. Has a high-affinity and a low affinity metal-binding site. The true nature of the physiological cofactor is under debate. The enzyme is active with cobalt, zinc, manganese or divalent iron ions. Most likely, methionine aminopeptidases function as mononuclear Fe(2+)-metalloproteases under physiological conditions, and the catalytically relevant metal-binding site has been assigned to the histidine-containing high-affinity site.</text>
</comment>
<comment type="subunit">
    <text evidence="1">Monomer.</text>
</comment>
<comment type="similarity">
    <text evidence="2">Belongs to the peptidase M24A family. Methionine aminopeptidase type 1 subfamily.</text>
</comment>
<accession>P41392</accession>
<sequence length="43" mass="4826">TVKTKDRSLSAQYEHTIVVTDNGCEILTLRKDDTIPAIISHNE</sequence>
<evidence type="ECO:0000250" key="1"/>
<evidence type="ECO:0000305" key="2"/>
<organism>
    <name type="scientific">Klebsiella oxytoca</name>
    <dbReference type="NCBI Taxonomy" id="571"/>
    <lineage>
        <taxon>Bacteria</taxon>
        <taxon>Pseudomonadati</taxon>
        <taxon>Pseudomonadota</taxon>
        <taxon>Gammaproteobacteria</taxon>
        <taxon>Enterobacterales</taxon>
        <taxon>Enterobacteriaceae</taxon>
        <taxon>Klebsiella/Raoultella group</taxon>
        <taxon>Klebsiella</taxon>
    </lineage>
</organism>
<reference key="1">
    <citation type="journal article" date="1995" name="Mol. Gen. Genet.">
        <title>The role of uridylyltransferase in the control of Klebsiella pneumoniae nif gene regulation.</title>
        <authorList>
            <person name="Edwards R.A."/>
            <person name="Merrick M.J."/>
        </authorList>
    </citation>
    <scope>NUCLEOTIDE SEQUENCE [GENOMIC DNA]</scope>
    <source>
        <strain>M5a1</strain>
    </source>
</reference>